<organism>
    <name type="scientific">Caenorhabditis briggsae</name>
    <dbReference type="NCBI Taxonomy" id="6238"/>
    <lineage>
        <taxon>Eukaryota</taxon>
        <taxon>Metazoa</taxon>
        <taxon>Ecdysozoa</taxon>
        <taxon>Nematoda</taxon>
        <taxon>Chromadorea</taxon>
        <taxon>Rhabditida</taxon>
        <taxon>Rhabditina</taxon>
        <taxon>Rhabditomorpha</taxon>
        <taxon>Rhabditoidea</taxon>
        <taxon>Rhabditidae</taxon>
        <taxon>Peloderinae</taxon>
        <taxon>Caenorhabditis</taxon>
    </lineage>
</organism>
<keyword id="KW-0229">DNA integration</keyword>
<keyword id="KW-0233">DNA recombination</keyword>
<keyword id="KW-0238">DNA-binding</keyword>
<keyword id="KW-0539">Nucleus</keyword>
<keyword id="KW-0814">Transposable element</keyword>
<sequence length="273" mass="31916">MDRNIVRVSREDPQRSSTDIQMVVKTPNEVTPSLRTVRRRLQDAGLHGRRPAKKPSISKKNRIARVAWARAHLHWGRQDWANHVFSDESKFNLFGTDGIKWIRRPVGCRFDPSYQLQTVKHGGGSVMVWGCFSGTSMDPLRRIDSIMDRFVYEDILENTMRPWARSTVGRAFVFQQDNDPKHTSKHIKEWFRRRHVDLLDWPSQSPDLNPIEHLWEHVERHVRGVRASNANQKFDQLQDVWQAIPMSVIDTILDSMPRRCQTVIDAKGFPTKY</sequence>
<protein>
    <recommendedName>
        <fullName>Transposable element Tcb2 transposase</fullName>
    </recommendedName>
</protein>
<comment type="function">
    <text>Probably essential for transposable element Tcb2 transposition.</text>
</comment>
<comment type="subcellular location">
    <subcellularLocation>
        <location>Nucleus</location>
    </subcellularLocation>
</comment>
<comment type="similarity">
    <text evidence="1">Belongs to the transposase 5 family.</text>
</comment>
<evidence type="ECO:0000305" key="1"/>
<dbReference type="EMBL" id="M64308">
    <property type="protein sequence ID" value="AAA28149.1"/>
    <property type="molecule type" value="Genomic_DNA"/>
</dbReference>
<dbReference type="SMR" id="Q04202"/>
<dbReference type="eggNOG" id="ENOG502RZ9M">
    <property type="taxonomic scope" value="Eukaryota"/>
</dbReference>
<dbReference type="HOGENOM" id="CLU_483337_0_0_1"/>
<dbReference type="GO" id="GO:0005634">
    <property type="term" value="C:nucleus"/>
    <property type="evidence" value="ECO:0007669"/>
    <property type="project" value="UniProtKB-SubCell"/>
</dbReference>
<dbReference type="GO" id="GO:0003677">
    <property type="term" value="F:DNA binding"/>
    <property type="evidence" value="ECO:0007669"/>
    <property type="project" value="UniProtKB-KW"/>
</dbReference>
<dbReference type="GO" id="GO:0015074">
    <property type="term" value="P:DNA integration"/>
    <property type="evidence" value="ECO:0007669"/>
    <property type="project" value="UniProtKB-KW"/>
</dbReference>
<dbReference type="GO" id="GO:0006313">
    <property type="term" value="P:DNA transposition"/>
    <property type="evidence" value="ECO:0007669"/>
    <property type="project" value="InterPro"/>
</dbReference>
<dbReference type="Gene3D" id="3.30.420.10">
    <property type="entry name" value="Ribonuclease H-like superfamily/Ribonuclease H"/>
    <property type="match status" value="1"/>
</dbReference>
<dbReference type="InterPro" id="IPR036397">
    <property type="entry name" value="RNaseH_sf"/>
</dbReference>
<dbReference type="InterPro" id="IPR038717">
    <property type="entry name" value="Tc1-like_DDE_dom"/>
</dbReference>
<dbReference type="InterPro" id="IPR052338">
    <property type="entry name" value="Transposase_5"/>
</dbReference>
<dbReference type="InterPro" id="IPR002492">
    <property type="entry name" value="Transposase_Tc1-like"/>
</dbReference>
<dbReference type="PANTHER" id="PTHR23022:SF134">
    <property type="entry name" value="TRANSPOSABLE ELEMENT TC1 TRANSPOSASE"/>
    <property type="match status" value="1"/>
</dbReference>
<dbReference type="PANTHER" id="PTHR23022">
    <property type="entry name" value="TRANSPOSABLE ELEMENT-RELATED"/>
    <property type="match status" value="1"/>
</dbReference>
<dbReference type="Pfam" id="PF13358">
    <property type="entry name" value="DDE_3"/>
    <property type="match status" value="1"/>
</dbReference>
<dbReference type="Pfam" id="PF01498">
    <property type="entry name" value="HTH_Tnp_Tc3_2"/>
    <property type="match status" value="1"/>
</dbReference>
<accession>Q04202</accession>
<name>TCB2_CAEBR</name>
<feature type="chain" id="PRO_0000072447" description="Transposable element Tcb2 transposase">
    <location>
        <begin position="1"/>
        <end position="273"/>
    </location>
</feature>
<reference key="1">
    <citation type="journal article" date="1991" name="Genome">
        <title>Evolutionarily conserved regions in Caenorhabditis transposable elements deduced by sequence comparison.</title>
        <authorList>
            <person name="Prasad S.S."/>
            <person name="Harris L.J."/>
            <person name="Baillie D.L."/>
            <person name="Rose A.M."/>
        </authorList>
    </citation>
    <scope>NUCLEOTIDE SEQUENCE [GENOMIC DNA]</scope>
</reference>
<proteinExistence type="inferred from homology"/>